<feature type="chain" id="PRO_1000185355" description="Phosphoglucosamine mutase">
    <location>
        <begin position="1"/>
        <end position="444"/>
    </location>
</feature>
<feature type="active site" description="Phosphoserine intermediate" evidence="1">
    <location>
        <position position="102"/>
    </location>
</feature>
<feature type="binding site" description="via phosphate group" evidence="1">
    <location>
        <position position="102"/>
    </location>
    <ligand>
        <name>Mg(2+)</name>
        <dbReference type="ChEBI" id="CHEBI:18420"/>
    </ligand>
</feature>
<feature type="binding site" evidence="1">
    <location>
        <position position="241"/>
    </location>
    <ligand>
        <name>Mg(2+)</name>
        <dbReference type="ChEBI" id="CHEBI:18420"/>
    </ligand>
</feature>
<feature type="binding site" evidence="1">
    <location>
        <position position="243"/>
    </location>
    <ligand>
        <name>Mg(2+)</name>
        <dbReference type="ChEBI" id="CHEBI:18420"/>
    </ligand>
</feature>
<feature type="binding site" evidence="1">
    <location>
        <position position="245"/>
    </location>
    <ligand>
        <name>Mg(2+)</name>
        <dbReference type="ChEBI" id="CHEBI:18420"/>
    </ligand>
</feature>
<feature type="modified residue" description="Phosphoserine" evidence="1">
    <location>
        <position position="102"/>
    </location>
</feature>
<comment type="function">
    <text evidence="1">Catalyzes the conversion of glucosamine-6-phosphate to glucosamine-1-phosphate.</text>
</comment>
<comment type="catalytic activity">
    <reaction evidence="1">
        <text>alpha-D-glucosamine 1-phosphate = D-glucosamine 6-phosphate</text>
        <dbReference type="Rhea" id="RHEA:23424"/>
        <dbReference type="ChEBI" id="CHEBI:58516"/>
        <dbReference type="ChEBI" id="CHEBI:58725"/>
        <dbReference type="EC" id="5.4.2.10"/>
    </reaction>
</comment>
<comment type="cofactor">
    <cofactor evidence="1">
        <name>Mg(2+)</name>
        <dbReference type="ChEBI" id="CHEBI:18420"/>
    </cofactor>
    <text evidence="1">Binds 1 Mg(2+) ion per subunit.</text>
</comment>
<comment type="PTM">
    <text evidence="1">Activated by phosphorylation.</text>
</comment>
<comment type="similarity">
    <text evidence="1">Belongs to the phosphohexose mutase family.</text>
</comment>
<protein>
    <recommendedName>
        <fullName evidence="1">Phosphoglucosamine mutase</fullName>
        <ecNumber evidence="1">5.4.2.10</ecNumber>
    </recommendedName>
</protein>
<proteinExistence type="inferred from homology"/>
<sequence length="444" mass="49359">MTFLQYFKTDGIRGKVGVNPITPDFLLKLGWSIGIVLGKNKTQKIIIGRDTRISGTMLQSILEFGILSTGVSTLLAGCMPTSAISYFTKSLNASAGIVISGSHNPFYDNGIKIFYKNGVKLTKEIEFSIEQKVQHTFLYPDYVNFGHSNNILDPESLYIDFCKKNFPKDLNLSKFTIILDCANGATFKIAPKIFEDLGARVITVAINPNGVNINQNSGSTNILMLKKIVLSESADLGLAFDGDGDRVIMVDHLGNQVDGDQIIYIIAKEYLKENKLKGGVVGTSMTNMGVILGLKKLGIPFCPAQIGDRNVYEKIKEKKWILGAEKSGHIVLLDKHSTGDGIIASLQVLLTMINNHMTLYDLSNQIKLFPQVFLNIFLKQDKDFEKDIKIQNILTQYKNILGQNSRVLVRRSGTEPCIRIMVEGEDYLKVYELAQYIGKTIKLL</sequence>
<reference key="1">
    <citation type="journal article" date="2009" name="Science">
        <title>The dynamics and time scale of ongoing genomic erosion in symbiotic bacteria.</title>
        <authorList>
            <person name="Moran N.A."/>
            <person name="McLaughlin H.J."/>
            <person name="Sorek R."/>
        </authorList>
    </citation>
    <scope>NUCLEOTIDE SEQUENCE [LARGE SCALE GENOMIC DNA]</scope>
    <source>
        <strain>5A</strain>
    </source>
</reference>
<accession>B8D9G5</accession>
<gene>
    <name evidence="1" type="primary">glmM</name>
    <name type="ordered locus">BUAP5A_374</name>
</gene>
<organism>
    <name type="scientific">Buchnera aphidicola subsp. Acyrthosiphon pisum (strain 5A)</name>
    <dbReference type="NCBI Taxonomy" id="563178"/>
    <lineage>
        <taxon>Bacteria</taxon>
        <taxon>Pseudomonadati</taxon>
        <taxon>Pseudomonadota</taxon>
        <taxon>Gammaproteobacteria</taxon>
        <taxon>Enterobacterales</taxon>
        <taxon>Erwiniaceae</taxon>
        <taxon>Buchnera</taxon>
    </lineage>
</organism>
<evidence type="ECO:0000255" key="1">
    <source>
        <dbReference type="HAMAP-Rule" id="MF_01554"/>
    </source>
</evidence>
<keyword id="KW-0413">Isomerase</keyword>
<keyword id="KW-0460">Magnesium</keyword>
<keyword id="KW-0479">Metal-binding</keyword>
<keyword id="KW-0597">Phosphoprotein</keyword>
<name>GLMM_BUCA5</name>
<dbReference type="EC" id="5.4.2.10" evidence="1"/>
<dbReference type="EMBL" id="CP001161">
    <property type="protein sequence ID" value="ACL30736.1"/>
    <property type="molecule type" value="Genomic_DNA"/>
</dbReference>
<dbReference type="RefSeq" id="WP_009874338.1">
    <property type="nucleotide sequence ID" value="NC_011833.1"/>
</dbReference>
<dbReference type="SMR" id="B8D9G5"/>
<dbReference type="KEGG" id="bap:BUAP5A_374"/>
<dbReference type="HOGENOM" id="CLU_016950_7_0_6"/>
<dbReference type="OrthoDB" id="9803322at2"/>
<dbReference type="Proteomes" id="UP000006904">
    <property type="component" value="Chromosome"/>
</dbReference>
<dbReference type="GO" id="GO:0005829">
    <property type="term" value="C:cytosol"/>
    <property type="evidence" value="ECO:0007669"/>
    <property type="project" value="TreeGrafter"/>
</dbReference>
<dbReference type="GO" id="GO:0000287">
    <property type="term" value="F:magnesium ion binding"/>
    <property type="evidence" value="ECO:0007669"/>
    <property type="project" value="UniProtKB-UniRule"/>
</dbReference>
<dbReference type="GO" id="GO:0008966">
    <property type="term" value="F:phosphoglucosamine mutase activity"/>
    <property type="evidence" value="ECO:0007669"/>
    <property type="project" value="UniProtKB-UniRule"/>
</dbReference>
<dbReference type="GO" id="GO:0004615">
    <property type="term" value="F:phosphomannomutase activity"/>
    <property type="evidence" value="ECO:0007669"/>
    <property type="project" value="TreeGrafter"/>
</dbReference>
<dbReference type="GO" id="GO:0005975">
    <property type="term" value="P:carbohydrate metabolic process"/>
    <property type="evidence" value="ECO:0007669"/>
    <property type="project" value="InterPro"/>
</dbReference>
<dbReference type="GO" id="GO:0009252">
    <property type="term" value="P:peptidoglycan biosynthetic process"/>
    <property type="evidence" value="ECO:0007669"/>
    <property type="project" value="TreeGrafter"/>
</dbReference>
<dbReference type="GO" id="GO:0006048">
    <property type="term" value="P:UDP-N-acetylglucosamine biosynthetic process"/>
    <property type="evidence" value="ECO:0007669"/>
    <property type="project" value="TreeGrafter"/>
</dbReference>
<dbReference type="CDD" id="cd05802">
    <property type="entry name" value="GlmM"/>
    <property type="match status" value="1"/>
</dbReference>
<dbReference type="FunFam" id="3.40.120.10:FF:000001">
    <property type="entry name" value="Phosphoglucosamine mutase"/>
    <property type="match status" value="1"/>
</dbReference>
<dbReference type="FunFam" id="3.40.120.10:FF:000003">
    <property type="entry name" value="Phosphoglucosamine mutase"/>
    <property type="match status" value="1"/>
</dbReference>
<dbReference type="Gene3D" id="3.40.120.10">
    <property type="entry name" value="Alpha-D-Glucose-1,6-Bisphosphate, subunit A, domain 3"/>
    <property type="match status" value="3"/>
</dbReference>
<dbReference type="Gene3D" id="3.30.310.50">
    <property type="entry name" value="Alpha-D-phosphohexomutase, C-terminal domain"/>
    <property type="match status" value="1"/>
</dbReference>
<dbReference type="HAMAP" id="MF_01554_B">
    <property type="entry name" value="GlmM_B"/>
    <property type="match status" value="1"/>
</dbReference>
<dbReference type="InterPro" id="IPR005844">
    <property type="entry name" value="A-D-PHexomutase_a/b/a-I"/>
</dbReference>
<dbReference type="InterPro" id="IPR016055">
    <property type="entry name" value="A-D-PHexomutase_a/b/a-I/II/III"/>
</dbReference>
<dbReference type="InterPro" id="IPR005845">
    <property type="entry name" value="A-D-PHexomutase_a/b/a-II"/>
</dbReference>
<dbReference type="InterPro" id="IPR005846">
    <property type="entry name" value="A-D-PHexomutase_a/b/a-III"/>
</dbReference>
<dbReference type="InterPro" id="IPR005843">
    <property type="entry name" value="A-D-PHexomutase_C"/>
</dbReference>
<dbReference type="InterPro" id="IPR036900">
    <property type="entry name" value="A-D-PHexomutase_C_sf"/>
</dbReference>
<dbReference type="InterPro" id="IPR016066">
    <property type="entry name" value="A-D-PHexomutase_CS"/>
</dbReference>
<dbReference type="InterPro" id="IPR005841">
    <property type="entry name" value="Alpha-D-phosphohexomutase_SF"/>
</dbReference>
<dbReference type="InterPro" id="IPR006352">
    <property type="entry name" value="GlmM_bact"/>
</dbReference>
<dbReference type="InterPro" id="IPR050060">
    <property type="entry name" value="Phosphoglucosamine_mutase"/>
</dbReference>
<dbReference type="NCBIfam" id="TIGR01455">
    <property type="entry name" value="glmM"/>
    <property type="match status" value="1"/>
</dbReference>
<dbReference type="NCBIfam" id="NF008139">
    <property type="entry name" value="PRK10887.1"/>
    <property type="match status" value="1"/>
</dbReference>
<dbReference type="PANTHER" id="PTHR42946:SF1">
    <property type="entry name" value="PHOSPHOGLUCOMUTASE (ALPHA-D-GLUCOSE-1,6-BISPHOSPHATE-DEPENDENT)"/>
    <property type="match status" value="1"/>
</dbReference>
<dbReference type="PANTHER" id="PTHR42946">
    <property type="entry name" value="PHOSPHOHEXOSE MUTASE"/>
    <property type="match status" value="1"/>
</dbReference>
<dbReference type="Pfam" id="PF02878">
    <property type="entry name" value="PGM_PMM_I"/>
    <property type="match status" value="1"/>
</dbReference>
<dbReference type="Pfam" id="PF02879">
    <property type="entry name" value="PGM_PMM_II"/>
    <property type="match status" value="1"/>
</dbReference>
<dbReference type="Pfam" id="PF02880">
    <property type="entry name" value="PGM_PMM_III"/>
    <property type="match status" value="1"/>
</dbReference>
<dbReference type="Pfam" id="PF00408">
    <property type="entry name" value="PGM_PMM_IV"/>
    <property type="match status" value="1"/>
</dbReference>
<dbReference type="PRINTS" id="PR00509">
    <property type="entry name" value="PGMPMM"/>
</dbReference>
<dbReference type="SUPFAM" id="SSF55957">
    <property type="entry name" value="Phosphoglucomutase, C-terminal domain"/>
    <property type="match status" value="1"/>
</dbReference>
<dbReference type="SUPFAM" id="SSF53738">
    <property type="entry name" value="Phosphoglucomutase, first 3 domains"/>
    <property type="match status" value="3"/>
</dbReference>
<dbReference type="PROSITE" id="PS00710">
    <property type="entry name" value="PGM_PMM"/>
    <property type="match status" value="1"/>
</dbReference>